<organism>
    <name type="scientific">Neurospora crassa (strain ATCC 24698 / 74-OR23-1A / CBS 708.71 / DSM 1257 / FGSC 987)</name>
    <dbReference type="NCBI Taxonomy" id="367110"/>
    <lineage>
        <taxon>Eukaryota</taxon>
        <taxon>Fungi</taxon>
        <taxon>Dikarya</taxon>
        <taxon>Ascomycota</taxon>
        <taxon>Pezizomycotina</taxon>
        <taxon>Sordariomycetes</taxon>
        <taxon>Sordariomycetidae</taxon>
        <taxon>Sordariales</taxon>
        <taxon>Sordariaceae</taxon>
        <taxon>Neurospora</taxon>
    </lineage>
</organism>
<proteinExistence type="evidence at protein level"/>
<keyword id="KW-0002">3D-structure</keyword>
<keyword id="KW-0496">Mitochondrion</keyword>
<keyword id="KW-1185">Reference proteome</keyword>
<keyword id="KW-0687">Ribonucleoprotein</keyword>
<keyword id="KW-0689">Ribosomal protein</keyword>
<dbReference type="EMBL" id="CM002237">
    <property type="protein sequence ID" value="EAA34046.1"/>
    <property type="molecule type" value="Genomic_DNA"/>
</dbReference>
<dbReference type="RefSeq" id="XP_963282.1">
    <property type="nucleotide sequence ID" value="XM_958189.2"/>
</dbReference>
<dbReference type="PDB" id="6YWS">
    <property type="method" value="EM"/>
    <property type="resolution" value="2.74 A"/>
    <property type="chains" value="S=1-274"/>
</dbReference>
<dbReference type="PDB" id="6YWV">
    <property type="method" value="EM"/>
    <property type="resolution" value="3.03 A"/>
    <property type="chains" value="S=1-274"/>
</dbReference>
<dbReference type="PDB" id="6YWX">
    <property type="method" value="EM"/>
    <property type="resolution" value="3.10 A"/>
    <property type="chains" value="S=1-274"/>
</dbReference>
<dbReference type="PDBsum" id="6YWS"/>
<dbReference type="PDBsum" id="6YWV"/>
<dbReference type="PDBsum" id="6YWX"/>
<dbReference type="EMDB" id="EMD-10973"/>
<dbReference type="EMDB" id="EMD-10977"/>
<dbReference type="EMDB" id="EMD-10978"/>
<dbReference type="SMR" id="Q7SC44"/>
<dbReference type="FunCoup" id="Q7SC44">
    <property type="interactions" value="197"/>
</dbReference>
<dbReference type="STRING" id="367110.Q7SC44"/>
<dbReference type="PaxDb" id="5141-EFNCRP00000007791"/>
<dbReference type="EnsemblFungi" id="EAA34046">
    <property type="protein sequence ID" value="EAA34046"/>
    <property type="gene ID" value="NCU08410"/>
</dbReference>
<dbReference type="GeneID" id="3879437"/>
<dbReference type="KEGG" id="ncr:NCU08410"/>
<dbReference type="VEuPathDB" id="FungiDB:NCU08410"/>
<dbReference type="HOGENOM" id="CLU_064548_0_0_1"/>
<dbReference type="InParanoid" id="Q7SC44"/>
<dbReference type="OMA" id="MLRWRIM"/>
<dbReference type="OrthoDB" id="361870at2759"/>
<dbReference type="Proteomes" id="UP000001805">
    <property type="component" value="Chromosome 6, Linkage Group II"/>
</dbReference>
<dbReference type="GO" id="GO:0005762">
    <property type="term" value="C:mitochondrial large ribosomal subunit"/>
    <property type="evidence" value="ECO:0000318"/>
    <property type="project" value="GO_Central"/>
</dbReference>
<dbReference type="GO" id="GO:0003735">
    <property type="term" value="F:structural constituent of ribosome"/>
    <property type="evidence" value="ECO:0000318"/>
    <property type="project" value="GO_Central"/>
</dbReference>
<dbReference type="FunFam" id="2.30.170.40:FF:000003">
    <property type="entry name" value="54S ribosomal protein L24"/>
    <property type="match status" value="1"/>
</dbReference>
<dbReference type="Gene3D" id="2.30.170.40">
    <property type="entry name" value="Ribosomal protein L28/L24"/>
    <property type="match status" value="1"/>
</dbReference>
<dbReference type="HAMAP" id="MF_00373">
    <property type="entry name" value="Ribosomal_bL28"/>
    <property type="match status" value="1"/>
</dbReference>
<dbReference type="InterPro" id="IPR026569">
    <property type="entry name" value="Ribosomal_bL28"/>
</dbReference>
<dbReference type="InterPro" id="IPR034704">
    <property type="entry name" value="Ribosomal_bL28/bL31-like_sf"/>
</dbReference>
<dbReference type="InterPro" id="IPR037147">
    <property type="entry name" value="Ribosomal_bL28_sf"/>
</dbReference>
<dbReference type="PANTHER" id="PTHR13528">
    <property type="entry name" value="39S RIBOSOMAL PROTEIN L28, MITOCHONDRIAL"/>
    <property type="match status" value="1"/>
</dbReference>
<dbReference type="PANTHER" id="PTHR13528:SF2">
    <property type="entry name" value="LARGE RIBOSOMAL SUBUNIT PROTEIN BL28M"/>
    <property type="match status" value="1"/>
</dbReference>
<dbReference type="Pfam" id="PF00830">
    <property type="entry name" value="Ribosomal_L28"/>
    <property type="match status" value="1"/>
</dbReference>
<dbReference type="SUPFAM" id="SSF143800">
    <property type="entry name" value="L28p-like"/>
    <property type="match status" value="1"/>
</dbReference>
<accession>Q7SC44</accession>
<feature type="chain" id="PRO_0000458621" description="Large ribosomal subunit protein bL28m">
    <location>
        <begin position="1"/>
        <end position="274"/>
    </location>
</feature>
<feature type="region of interest" description="Disordered" evidence="1">
    <location>
        <begin position="249"/>
        <end position="274"/>
    </location>
</feature>
<feature type="compositionally biased region" description="Basic and acidic residues" evidence="1">
    <location>
        <begin position="262"/>
        <end position="274"/>
    </location>
</feature>
<gene>
    <name type="primary">mrpl24</name>
    <name type="ORF">NCU08410</name>
</gene>
<comment type="function">
    <text evidence="6">Component of the mitochondrial ribosome (mitoribosome), a dedicated translation machinery responsible for the synthesis of mitochondrial genome-encoded proteins, including at least some of the essential transmembrane subunits of the mitochondrial respiratory chain. The mitoribosomes are attached to the mitochondrial inner membrane and translation products are cotranslationally integrated into the membrane.</text>
</comment>
<comment type="subunit">
    <text evidence="2 3">Component of the mitochondrial large ribosomal subunit (mt-LSU). Mature N.crassa 74S mitochondrial ribosomes consist of a small (37S) and a large (54S) subunit. The 37S small subunit contains a 16S ribosomal RNA (16S mt-rRNA) and 32 different proteins. The 54S large subunit contains a 23S rRNA (23S mt-rRNA) and 42 different proteins.</text>
</comment>
<comment type="subcellular location">
    <subcellularLocation>
        <location evidence="2 3">Mitochondrion</location>
    </subcellularLocation>
</comment>
<comment type="similarity">
    <text evidence="5">Belongs to the bacterial ribosomal protein bL28 family.</text>
</comment>
<reference key="1">
    <citation type="journal article" date="2003" name="Nature">
        <title>The genome sequence of the filamentous fungus Neurospora crassa.</title>
        <authorList>
            <person name="Galagan J.E."/>
            <person name="Calvo S.E."/>
            <person name="Borkovich K.A."/>
            <person name="Selker E.U."/>
            <person name="Read N.D."/>
            <person name="Jaffe D.B."/>
            <person name="FitzHugh W."/>
            <person name="Ma L.-J."/>
            <person name="Smirnov S."/>
            <person name="Purcell S."/>
            <person name="Rehman B."/>
            <person name="Elkins T."/>
            <person name="Engels R."/>
            <person name="Wang S."/>
            <person name="Nielsen C.B."/>
            <person name="Butler J."/>
            <person name="Endrizzi M."/>
            <person name="Qui D."/>
            <person name="Ianakiev P."/>
            <person name="Bell-Pedersen D."/>
            <person name="Nelson M.A."/>
            <person name="Werner-Washburne M."/>
            <person name="Selitrennikoff C.P."/>
            <person name="Kinsey J.A."/>
            <person name="Braun E.L."/>
            <person name="Zelter A."/>
            <person name="Schulte U."/>
            <person name="Kothe G.O."/>
            <person name="Jedd G."/>
            <person name="Mewes H.-W."/>
            <person name="Staben C."/>
            <person name="Marcotte E."/>
            <person name="Greenberg D."/>
            <person name="Roy A."/>
            <person name="Foley K."/>
            <person name="Naylor J."/>
            <person name="Stange-Thomann N."/>
            <person name="Barrett R."/>
            <person name="Gnerre S."/>
            <person name="Kamal M."/>
            <person name="Kamvysselis M."/>
            <person name="Mauceli E.W."/>
            <person name="Bielke C."/>
            <person name="Rudd S."/>
            <person name="Frishman D."/>
            <person name="Krystofova S."/>
            <person name="Rasmussen C."/>
            <person name="Metzenberg R.L."/>
            <person name="Perkins D.D."/>
            <person name="Kroken S."/>
            <person name="Cogoni C."/>
            <person name="Macino G."/>
            <person name="Catcheside D.E.A."/>
            <person name="Li W."/>
            <person name="Pratt R.J."/>
            <person name="Osmani S.A."/>
            <person name="DeSouza C.P.C."/>
            <person name="Glass N.L."/>
            <person name="Orbach M.J."/>
            <person name="Berglund J.A."/>
            <person name="Voelker R."/>
            <person name="Yarden O."/>
            <person name="Plamann M."/>
            <person name="Seiler S."/>
            <person name="Dunlap J.C."/>
            <person name="Radford A."/>
            <person name="Aramayo R."/>
            <person name="Natvig D.O."/>
            <person name="Alex L.A."/>
            <person name="Mannhaupt G."/>
            <person name="Ebbole D.J."/>
            <person name="Freitag M."/>
            <person name="Paulsen I."/>
            <person name="Sachs M.S."/>
            <person name="Lander E.S."/>
            <person name="Nusbaum C."/>
            <person name="Birren B.W."/>
        </authorList>
    </citation>
    <scope>NUCLEOTIDE SEQUENCE [LARGE SCALE GENOMIC DNA]</scope>
    <source>
        <strain>ATCC 24698 / 74-OR23-1A / CBS 708.71 / DSM 1257 / FGSC 987</strain>
    </source>
</reference>
<reference key="2">
    <citation type="journal article" date="2006" name="FEMS Microbiol. Lett.">
        <title>Identification and comparative analysis of the large subunit mitochondrial ribosomal proteins of Neurospora crassa.</title>
        <authorList>
            <person name="Gan X."/>
            <person name="Arita K."/>
            <person name="Isono S."/>
            <person name="Kitakawa M."/>
            <person name="Yoshino K."/>
            <person name="Yonezawa K."/>
            <person name="Kato A."/>
            <person name="Inoue H."/>
            <person name="Isono K."/>
        </authorList>
    </citation>
    <scope>IDENTIFICATION IN THE MITOCHONDRIAL RIBOSOMAL LARGE COMPLEX</scope>
    <scope>IDENTIFICATION BY MASS SPECTROMETRY</scope>
</reference>
<reference evidence="7 8" key="3">
    <citation type="journal article" date="2020" name="Nat. Commun.">
        <title>Analysis of translating mitoribosome reveals functional characteristics of translation in mitochondria of fungi.</title>
        <authorList>
            <person name="Itoh Y."/>
            <person name="Naschberger A."/>
            <person name="Mortezaei N."/>
            <person name="Herrmann J.M."/>
            <person name="Amunts A."/>
        </authorList>
    </citation>
    <scope>STRUCTURE BY ELECTRON MICROSCOPY (2.74 ANGSTROMS)</scope>
</reference>
<evidence type="ECO:0000256" key="1">
    <source>
        <dbReference type="SAM" id="MobiDB-lite"/>
    </source>
</evidence>
<evidence type="ECO:0000269" key="2">
    <source>
    </source>
</evidence>
<evidence type="ECO:0000269" key="3">
    <source>
    </source>
</evidence>
<evidence type="ECO:0000303" key="4">
    <source>
    </source>
</evidence>
<evidence type="ECO:0000305" key="5"/>
<evidence type="ECO:0000305" key="6">
    <source>
    </source>
</evidence>
<evidence type="ECO:0007744" key="7">
    <source>
        <dbReference type="PDB" id="6YWS"/>
    </source>
</evidence>
<evidence type="ECO:0007744" key="8">
    <source>
        <dbReference type="PDB" id="6YWV"/>
    </source>
</evidence>
<sequence length="274" mass="31451">MSSFLVRPFCLRATTTTTTTTTTTALVQQQLRALTTTTALTYHQPRVPSSAIPIPNVSGRVPLPDSTPVPEDFKIEIPSYPYGPRRVYHQSNTGLYGSALIRFGNNVSKRNEIKTRRKWRPNVQQKRLWSKSLGVFVRTRVTTRVLRTIDKVGGLDEYLLGHKAARVKELGPWGWMLRWRIMQTPEIRERFAKEREALGLPPRREEDEEKSLEEQLREFQVAGIQFAEGKAPKTKGQLKEEADRLIKKSETEEFGLGQEEDLFMKEEPKPTKMA</sequence>
<name>RM24_NEUCR</name>
<protein>
    <recommendedName>
        <fullName evidence="4">Large ribosomal subunit protein bL28m</fullName>
    </recommendedName>
</protein>